<dbReference type="EC" id="1.2.1.103" evidence="1"/>
<dbReference type="EC" id="1.2.1.106" evidence="1"/>
<dbReference type="EMBL" id="DP000238">
    <property type="protein sequence ID" value="ABK77827.1"/>
    <property type="molecule type" value="Genomic_DNA"/>
</dbReference>
<dbReference type="SMR" id="A0RWW0"/>
<dbReference type="STRING" id="414004.CENSYa_1203"/>
<dbReference type="EnsemblBacteria" id="ABK77827">
    <property type="protein sequence ID" value="ABK77827"/>
    <property type="gene ID" value="CENSYa_1203"/>
</dbReference>
<dbReference type="KEGG" id="csy:CENSYa_1203"/>
<dbReference type="PATRIC" id="fig|414004.10.peg.1095"/>
<dbReference type="HOGENOM" id="CLU_006384_0_1_2"/>
<dbReference type="UniPathway" id="UPA00033">
    <property type="reaction ID" value="UER00037"/>
</dbReference>
<dbReference type="UniPathway" id="UPA00068"/>
<dbReference type="Proteomes" id="UP000000758">
    <property type="component" value="Chromosome"/>
</dbReference>
<dbReference type="GO" id="GO:0005737">
    <property type="term" value="C:cytoplasm"/>
    <property type="evidence" value="ECO:0007669"/>
    <property type="project" value="UniProtKB-SubCell"/>
</dbReference>
<dbReference type="GO" id="GO:0043870">
    <property type="term" value="F:N-acetyl-gamma-aminoadipyl-phosphate reductase activity"/>
    <property type="evidence" value="ECO:0007669"/>
    <property type="project" value="RHEA"/>
</dbReference>
<dbReference type="GO" id="GO:0003942">
    <property type="term" value="F:N-acetyl-gamma-glutamyl-phosphate reductase activity"/>
    <property type="evidence" value="ECO:0007669"/>
    <property type="project" value="InterPro"/>
</dbReference>
<dbReference type="GO" id="GO:0051287">
    <property type="term" value="F:NAD binding"/>
    <property type="evidence" value="ECO:0007669"/>
    <property type="project" value="InterPro"/>
</dbReference>
<dbReference type="GO" id="GO:0070401">
    <property type="term" value="F:NADP+ binding"/>
    <property type="evidence" value="ECO:0007669"/>
    <property type="project" value="InterPro"/>
</dbReference>
<dbReference type="GO" id="GO:0042450">
    <property type="term" value="P:arginine biosynthetic process via ornithine"/>
    <property type="evidence" value="ECO:0007669"/>
    <property type="project" value="UniProtKB-UniRule"/>
</dbReference>
<dbReference type="GO" id="GO:0006526">
    <property type="term" value="P:L-arginine biosynthetic process"/>
    <property type="evidence" value="ECO:0007669"/>
    <property type="project" value="UniProtKB-UniPathway"/>
</dbReference>
<dbReference type="GO" id="GO:0019878">
    <property type="term" value="P:lysine biosynthetic process via aminoadipic acid"/>
    <property type="evidence" value="ECO:0007669"/>
    <property type="project" value="UniProtKB-UniRule"/>
</dbReference>
<dbReference type="CDD" id="cd23939">
    <property type="entry name" value="AGPR_1_C_LysY"/>
    <property type="match status" value="1"/>
</dbReference>
<dbReference type="CDD" id="cd17895">
    <property type="entry name" value="AGPR_1_N"/>
    <property type="match status" value="1"/>
</dbReference>
<dbReference type="Gene3D" id="3.30.360.10">
    <property type="entry name" value="Dihydrodipicolinate Reductase, domain 2"/>
    <property type="match status" value="1"/>
</dbReference>
<dbReference type="Gene3D" id="3.40.50.720">
    <property type="entry name" value="NAD(P)-binding Rossmann-like Domain"/>
    <property type="match status" value="1"/>
</dbReference>
<dbReference type="HAMAP" id="MF_00150">
    <property type="entry name" value="ArgC_type1"/>
    <property type="match status" value="1"/>
</dbReference>
<dbReference type="HAMAP" id="MF_02083">
    <property type="entry name" value="LysY"/>
    <property type="match status" value="1"/>
</dbReference>
<dbReference type="InterPro" id="IPR000706">
    <property type="entry name" value="AGPR_type-1"/>
</dbReference>
<dbReference type="InterPro" id="IPR037535">
    <property type="entry name" value="LysY"/>
</dbReference>
<dbReference type="InterPro" id="IPR036291">
    <property type="entry name" value="NAD(P)-bd_dom_sf"/>
</dbReference>
<dbReference type="InterPro" id="IPR050085">
    <property type="entry name" value="NAGSA_dehydrogenase"/>
</dbReference>
<dbReference type="InterPro" id="IPR000534">
    <property type="entry name" value="Semialdehyde_DH_NAD-bd"/>
</dbReference>
<dbReference type="NCBIfam" id="TIGR01850">
    <property type="entry name" value="argC"/>
    <property type="match status" value="1"/>
</dbReference>
<dbReference type="PANTHER" id="PTHR32338:SF11">
    <property type="entry name" value="[LYSW]-L-2-AMINOADIPATE_[LYSW]-L-GLUTAMATE PHOSPHATE REDUCTASE-RELATED"/>
    <property type="match status" value="1"/>
</dbReference>
<dbReference type="PANTHER" id="PTHR32338">
    <property type="entry name" value="N-ACETYL-GAMMA-GLUTAMYL-PHOSPHATE REDUCTASE, CHLOROPLASTIC-RELATED-RELATED"/>
    <property type="match status" value="1"/>
</dbReference>
<dbReference type="Pfam" id="PF01118">
    <property type="entry name" value="Semialdhyde_dh"/>
    <property type="match status" value="1"/>
</dbReference>
<dbReference type="Pfam" id="PF22698">
    <property type="entry name" value="Semialdhyde_dhC_1"/>
    <property type="match status" value="1"/>
</dbReference>
<dbReference type="SMART" id="SM00859">
    <property type="entry name" value="Semialdhyde_dh"/>
    <property type="match status" value="1"/>
</dbReference>
<dbReference type="SUPFAM" id="SSF55347">
    <property type="entry name" value="Glyceraldehyde-3-phosphate dehydrogenase-like, C-terminal domain"/>
    <property type="match status" value="1"/>
</dbReference>
<dbReference type="SUPFAM" id="SSF51735">
    <property type="entry name" value="NAD(P)-binding Rossmann-fold domains"/>
    <property type="match status" value="1"/>
</dbReference>
<evidence type="ECO:0000255" key="1">
    <source>
        <dbReference type="HAMAP-Rule" id="MF_02083"/>
    </source>
</evidence>
<gene>
    <name evidence="1" type="primary">lysY</name>
    <name type="ordered locus">CENSYa_1203</name>
</gene>
<comment type="function">
    <text evidence="1">Involved in both the arginine and lysine biosynthetic pathways.</text>
</comment>
<comment type="catalytic activity">
    <reaction evidence="1">
        <text>[amino-group carrier protein]-C-terminal-N-(1-carboxy-5-oxopentan-1-yl)-L-glutamine + phosphate + NADP(+) = [amino-group carrier protein]-C-terminal-N-(1-carboxy-5-phosphooxy-5-oxopentan-1-yl)-L-glutamine + NADPH + H(+)</text>
        <dbReference type="Rhea" id="RHEA:41948"/>
        <dbReference type="Rhea" id="RHEA-COMP:9712"/>
        <dbReference type="Rhea" id="RHEA-COMP:9714"/>
        <dbReference type="ChEBI" id="CHEBI:15378"/>
        <dbReference type="ChEBI" id="CHEBI:43474"/>
        <dbReference type="ChEBI" id="CHEBI:57783"/>
        <dbReference type="ChEBI" id="CHEBI:58349"/>
        <dbReference type="ChEBI" id="CHEBI:78499"/>
        <dbReference type="ChEBI" id="CHEBI:78501"/>
        <dbReference type="EC" id="1.2.1.103"/>
    </reaction>
</comment>
<comment type="catalytic activity">
    <reaction evidence="1">
        <text>[amino-group carrier protein]-C-terminal-gamma-(L-glutamyl-5-semialdehyde)-L-glutamate + phosphate + NADP(+) = [amino-group carrier protein]-C-terminal-gamma-(5-phospho-L-glutamyl)-L-glutamate + NADPH + H(+)</text>
        <dbReference type="Rhea" id="RHEA:52668"/>
        <dbReference type="Rhea" id="RHEA-COMP:13313"/>
        <dbReference type="Rhea" id="RHEA-COMP:13327"/>
        <dbReference type="ChEBI" id="CHEBI:15378"/>
        <dbReference type="ChEBI" id="CHEBI:43474"/>
        <dbReference type="ChEBI" id="CHEBI:57783"/>
        <dbReference type="ChEBI" id="CHEBI:58349"/>
        <dbReference type="ChEBI" id="CHEBI:136717"/>
        <dbReference type="ChEBI" id="CHEBI:136761"/>
        <dbReference type="EC" id="1.2.1.106"/>
    </reaction>
</comment>
<comment type="pathway">
    <text evidence="1">Amino-acid biosynthesis; L-lysine biosynthesis via AAA pathway; L-lysine from L-alpha-aminoadipate (Thermus route): step 3/5.</text>
</comment>
<comment type="pathway">
    <text evidence="1">Amino-acid biosynthesis; L-arginine biosynthesis.</text>
</comment>
<comment type="subcellular location">
    <subcellularLocation>
        <location evidence="1">Cytoplasm</location>
    </subcellularLocation>
</comment>
<comment type="similarity">
    <text evidence="1">Belongs to the NAGSA dehydrogenase family. Type 1 subfamily. LysY sub-subfamily.</text>
</comment>
<proteinExistence type="inferred from homology"/>
<name>LYSY_CENSY</name>
<reference key="1">
    <citation type="journal article" date="2006" name="Proc. Natl. Acad. Sci. U.S.A.">
        <title>Genomic analysis of the uncultivated marine crenarchaeote Cenarchaeum symbiosum.</title>
        <authorList>
            <person name="Hallam S.J."/>
            <person name="Konstantinidis K.T."/>
            <person name="Putnam N."/>
            <person name="Schleper C."/>
            <person name="Watanabe Y."/>
            <person name="Sugahara J."/>
            <person name="Preston C."/>
            <person name="de la Torre J."/>
            <person name="Richardson P.M."/>
            <person name="DeLong E.F."/>
        </authorList>
    </citation>
    <scope>NUCLEOTIDE SEQUENCE [LARGE SCALE GENOMIC DNA]</scope>
    <source>
        <strain>A</strain>
    </source>
</reference>
<sequence length="348" mass="38320">MKVGVVGASGYVGGETLRLLVNHPDVEIAAVTSRQHVGEYLHRVQPSLRGFTDLTFSELDYDRLSDSCDLVFTAVPHGTATDIVRALYDRDIKVIDLSADYRLHDPADYTKWYGWEHPHPDYLSKSVFGIPELHREEIRSAKLVSCPGCMAVTSILALAPPVREGLVDTEHIVVDSKIGSSGAGAGAGTAHAMRAGVIRPYKPAKHRHTGEIEQELSGIAGKKIRVSMSPHAVDVVRGILCTNHVFLTREASEKDLWKMYRQAYGEERFVRLIRDKKGLYKFPDPKFLVGSNFCDIGFDLDEDNNRLVAISASDNLMKGAAGSAIQNMNIMAGLDEMSGLRYTPLTPV</sequence>
<organism>
    <name type="scientific">Cenarchaeum symbiosum (strain A)</name>
    <dbReference type="NCBI Taxonomy" id="414004"/>
    <lineage>
        <taxon>Archaea</taxon>
        <taxon>Nitrososphaerota</taxon>
        <taxon>Candidatus Cenarchaeales</taxon>
        <taxon>Candidatus Cenarchaeaceae</taxon>
        <taxon>Candidatus Cenarchaeum</taxon>
    </lineage>
</organism>
<protein>
    <recommendedName>
        <fullName evidence="1">Putative [LysW]-L-2-aminoadipate/[LysW]-L-glutamate phosphate reductase</fullName>
        <ecNumber evidence="1">1.2.1.103</ecNumber>
        <ecNumber evidence="1">1.2.1.106</ecNumber>
    </recommendedName>
</protein>
<keyword id="KW-0028">Amino-acid biosynthesis</keyword>
<keyword id="KW-0055">Arginine biosynthesis</keyword>
<keyword id="KW-0963">Cytoplasm</keyword>
<keyword id="KW-0457">Lysine biosynthesis</keyword>
<keyword id="KW-0521">NADP</keyword>
<keyword id="KW-0560">Oxidoreductase</keyword>
<keyword id="KW-1185">Reference proteome</keyword>
<accession>A0RWW0</accession>
<feature type="chain" id="PRO_1000010987" description="Putative [LysW]-L-2-aminoadipate/[LysW]-L-glutamate phosphate reductase">
    <location>
        <begin position="1"/>
        <end position="348"/>
    </location>
</feature>
<feature type="active site" evidence="1">
    <location>
        <position position="149"/>
    </location>
</feature>
<feature type="binding site" evidence="1">
    <location>
        <begin position="9"/>
        <end position="12"/>
    </location>
    <ligand>
        <name>NADP(+)</name>
        <dbReference type="ChEBI" id="CHEBI:58349"/>
    </ligand>
</feature>
<feature type="binding site" evidence="1">
    <location>
        <position position="315"/>
    </location>
    <ligand>
        <name>NADP(+)</name>
        <dbReference type="ChEBI" id="CHEBI:58349"/>
    </ligand>
</feature>